<dbReference type="EC" id="3.5.2.7" evidence="1"/>
<dbReference type="EMBL" id="CP000458">
    <property type="protein sequence ID" value="ABK08919.1"/>
    <property type="molecule type" value="Genomic_DNA"/>
</dbReference>
<dbReference type="RefSeq" id="WP_011549427.1">
    <property type="nucleotide sequence ID" value="NC_008542.1"/>
</dbReference>
<dbReference type="SMR" id="A0K8U2"/>
<dbReference type="KEGG" id="bch:Bcen2424_2168"/>
<dbReference type="HOGENOM" id="CLU_041647_0_0_4"/>
<dbReference type="UniPathway" id="UPA00379">
    <property type="reaction ID" value="UER00551"/>
</dbReference>
<dbReference type="GO" id="GO:0005737">
    <property type="term" value="C:cytoplasm"/>
    <property type="evidence" value="ECO:0007669"/>
    <property type="project" value="UniProtKB-SubCell"/>
</dbReference>
<dbReference type="GO" id="GO:0050480">
    <property type="term" value="F:imidazolonepropionase activity"/>
    <property type="evidence" value="ECO:0007669"/>
    <property type="project" value="UniProtKB-UniRule"/>
</dbReference>
<dbReference type="GO" id="GO:0005506">
    <property type="term" value="F:iron ion binding"/>
    <property type="evidence" value="ECO:0007669"/>
    <property type="project" value="UniProtKB-UniRule"/>
</dbReference>
<dbReference type="GO" id="GO:0008270">
    <property type="term" value="F:zinc ion binding"/>
    <property type="evidence" value="ECO:0007669"/>
    <property type="project" value="UniProtKB-UniRule"/>
</dbReference>
<dbReference type="GO" id="GO:0019556">
    <property type="term" value="P:L-histidine catabolic process to glutamate and formamide"/>
    <property type="evidence" value="ECO:0007669"/>
    <property type="project" value="UniProtKB-UniPathway"/>
</dbReference>
<dbReference type="GO" id="GO:0019557">
    <property type="term" value="P:L-histidine catabolic process to glutamate and formate"/>
    <property type="evidence" value="ECO:0007669"/>
    <property type="project" value="UniProtKB-UniPathway"/>
</dbReference>
<dbReference type="CDD" id="cd01296">
    <property type="entry name" value="Imidazolone-5PH"/>
    <property type="match status" value="1"/>
</dbReference>
<dbReference type="FunFam" id="3.20.20.140:FF:000007">
    <property type="entry name" value="Imidazolonepropionase"/>
    <property type="match status" value="1"/>
</dbReference>
<dbReference type="Gene3D" id="3.20.20.140">
    <property type="entry name" value="Metal-dependent hydrolases"/>
    <property type="match status" value="1"/>
</dbReference>
<dbReference type="Gene3D" id="2.30.40.10">
    <property type="entry name" value="Urease, subunit C, domain 1"/>
    <property type="match status" value="1"/>
</dbReference>
<dbReference type="HAMAP" id="MF_00372">
    <property type="entry name" value="HutI"/>
    <property type="match status" value="1"/>
</dbReference>
<dbReference type="InterPro" id="IPR006680">
    <property type="entry name" value="Amidohydro-rel"/>
</dbReference>
<dbReference type="InterPro" id="IPR005920">
    <property type="entry name" value="HutI"/>
</dbReference>
<dbReference type="InterPro" id="IPR011059">
    <property type="entry name" value="Metal-dep_hydrolase_composite"/>
</dbReference>
<dbReference type="InterPro" id="IPR032466">
    <property type="entry name" value="Metal_Hydrolase"/>
</dbReference>
<dbReference type="NCBIfam" id="TIGR01224">
    <property type="entry name" value="hutI"/>
    <property type="match status" value="1"/>
</dbReference>
<dbReference type="PANTHER" id="PTHR42752">
    <property type="entry name" value="IMIDAZOLONEPROPIONASE"/>
    <property type="match status" value="1"/>
</dbReference>
<dbReference type="PANTHER" id="PTHR42752:SF1">
    <property type="entry name" value="IMIDAZOLONEPROPIONASE-RELATED"/>
    <property type="match status" value="1"/>
</dbReference>
<dbReference type="Pfam" id="PF01979">
    <property type="entry name" value="Amidohydro_1"/>
    <property type="match status" value="1"/>
</dbReference>
<dbReference type="SUPFAM" id="SSF51338">
    <property type="entry name" value="Composite domain of metallo-dependent hydrolases"/>
    <property type="match status" value="1"/>
</dbReference>
<dbReference type="SUPFAM" id="SSF51556">
    <property type="entry name" value="Metallo-dependent hydrolases"/>
    <property type="match status" value="1"/>
</dbReference>
<feature type="chain" id="PRO_0000306447" description="Imidazolonepropionase">
    <location>
        <begin position="1"/>
        <end position="407"/>
    </location>
</feature>
<feature type="binding site" evidence="1">
    <location>
        <position position="68"/>
    </location>
    <ligand>
        <name>Fe(3+)</name>
        <dbReference type="ChEBI" id="CHEBI:29034"/>
    </ligand>
</feature>
<feature type="binding site" evidence="1">
    <location>
        <position position="68"/>
    </location>
    <ligand>
        <name>Zn(2+)</name>
        <dbReference type="ChEBI" id="CHEBI:29105"/>
    </ligand>
</feature>
<feature type="binding site" evidence="1">
    <location>
        <position position="70"/>
    </location>
    <ligand>
        <name>Fe(3+)</name>
        <dbReference type="ChEBI" id="CHEBI:29034"/>
    </ligand>
</feature>
<feature type="binding site" evidence="1">
    <location>
        <position position="70"/>
    </location>
    <ligand>
        <name>Zn(2+)</name>
        <dbReference type="ChEBI" id="CHEBI:29105"/>
    </ligand>
</feature>
<feature type="binding site" evidence="1">
    <location>
        <position position="77"/>
    </location>
    <ligand>
        <name>4-imidazolone-5-propanoate</name>
        <dbReference type="ChEBI" id="CHEBI:77893"/>
    </ligand>
</feature>
<feature type="binding site" evidence="1">
    <location>
        <position position="140"/>
    </location>
    <ligand>
        <name>4-imidazolone-5-propanoate</name>
        <dbReference type="ChEBI" id="CHEBI:77893"/>
    </ligand>
</feature>
<feature type="binding site" evidence="1">
    <location>
        <position position="140"/>
    </location>
    <ligand>
        <name>N-formimidoyl-L-glutamate</name>
        <dbReference type="ChEBI" id="CHEBI:58928"/>
    </ligand>
</feature>
<feature type="binding site" evidence="1">
    <location>
        <position position="173"/>
    </location>
    <ligand>
        <name>4-imidazolone-5-propanoate</name>
        <dbReference type="ChEBI" id="CHEBI:77893"/>
    </ligand>
</feature>
<feature type="binding site" evidence="1">
    <location>
        <position position="238"/>
    </location>
    <ligand>
        <name>Fe(3+)</name>
        <dbReference type="ChEBI" id="CHEBI:29034"/>
    </ligand>
</feature>
<feature type="binding site" evidence="1">
    <location>
        <position position="238"/>
    </location>
    <ligand>
        <name>Zn(2+)</name>
        <dbReference type="ChEBI" id="CHEBI:29105"/>
    </ligand>
</feature>
<feature type="binding site" evidence="1">
    <location>
        <position position="241"/>
    </location>
    <ligand>
        <name>4-imidazolone-5-propanoate</name>
        <dbReference type="ChEBI" id="CHEBI:77893"/>
    </ligand>
</feature>
<feature type="binding site" evidence="1">
    <location>
        <position position="313"/>
    </location>
    <ligand>
        <name>Fe(3+)</name>
        <dbReference type="ChEBI" id="CHEBI:29034"/>
    </ligand>
</feature>
<feature type="binding site" evidence="1">
    <location>
        <position position="313"/>
    </location>
    <ligand>
        <name>Zn(2+)</name>
        <dbReference type="ChEBI" id="CHEBI:29105"/>
    </ligand>
</feature>
<feature type="binding site" evidence="1">
    <location>
        <position position="315"/>
    </location>
    <ligand>
        <name>N-formimidoyl-L-glutamate</name>
        <dbReference type="ChEBI" id="CHEBI:58928"/>
    </ligand>
</feature>
<feature type="binding site" evidence="1">
    <location>
        <position position="317"/>
    </location>
    <ligand>
        <name>N-formimidoyl-L-glutamate</name>
        <dbReference type="ChEBI" id="CHEBI:58928"/>
    </ligand>
</feature>
<feature type="binding site" evidence="1">
    <location>
        <position position="318"/>
    </location>
    <ligand>
        <name>4-imidazolone-5-propanoate</name>
        <dbReference type="ChEBI" id="CHEBI:77893"/>
    </ligand>
</feature>
<gene>
    <name evidence="1" type="primary">hutI</name>
    <name type="ordered locus">Bcen2424_2168</name>
</gene>
<name>HUTI_BURCH</name>
<reference key="1">
    <citation type="submission" date="2006-08" db="EMBL/GenBank/DDBJ databases">
        <title>Complete sequence of chromosome 1 of Burkholderia cenocepacia HI2424.</title>
        <authorList>
            <person name="Copeland A."/>
            <person name="Lucas S."/>
            <person name="Lapidus A."/>
            <person name="Barry K."/>
            <person name="Detter J.C."/>
            <person name="Glavina del Rio T."/>
            <person name="Hammon N."/>
            <person name="Israni S."/>
            <person name="Pitluck S."/>
            <person name="Chain P."/>
            <person name="Malfatti S."/>
            <person name="Shin M."/>
            <person name="Vergez L."/>
            <person name="Schmutz J."/>
            <person name="Larimer F."/>
            <person name="Land M."/>
            <person name="Hauser L."/>
            <person name="Kyrpides N."/>
            <person name="Kim E."/>
            <person name="LiPuma J.J."/>
            <person name="Gonzalez C.F."/>
            <person name="Konstantinidis K."/>
            <person name="Tiedje J.M."/>
            <person name="Richardson P."/>
        </authorList>
    </citation>
    <scope>NUCLEOTIDE SEQUENCE [LARGE SCALE GENOMIC DNA]</scope>
    <source>
        <strain>HI2424</strain>
    </source>
</reference>
<sequence length="407" mass="44092">MKPTVWHHLRLCPHGHPDETIDDAAIAVDETGTIAWLGALSALPHGYAHWQREDLHGAWVTPGLVDCHTHLVYGGTRADEFAQRLAGVSYEEIARQGGGIVSTVRATRAADETTLFVQAAARLQPLLAEGVTAIEIKSGYGLDLASERKMLRVARQLGERFPVTVYTTFLGAHALPPEYAGRADEYIDEVCDRMLPTLADEGLVDAVDVFCERIGFSLAQTERVFEAATRRGLPVKLHAEQLSNAGGTALAARYRALSADHLEFLDEAGIEAMKAAGTVAVLLPGAYYFIRETQLPPIDLLRKHGVPIALATDHNPGTSPLESLLLTLNMGCTLFRMTVPEVLQGVTRHAAAALGRADRHGALEVGRQADFAAWSVGSLAELAYWIGRPLCEQVVRGGTPVFRRMNG</sequence>
<proteinExistence type="inferred from homology"/>
<comment type="function">
    <text evidence="1">Catalyzes the hydrolytic cleavage of the carbon-nitrogen bond in imidazolone-5-propanoate to yield N-formimidoyl-L-glutamate. It is the third step in the universal histidine degradation pathway.</text>
</comment>
<comment type="catalytic activity">
    <reaction evidence="1">
        <text>4-imidazolone-5-propanoate + H2O = N-formimidoyl-L-glutamate</text>
        <dbReference type="Rhea" id="RHEA:23660"/>
        <dbReference type="ChEBI" id="CHEBI:15377"/>
        <dbReference type="ChEBI" id="CHEBI:58928"/>
        <dbReference type="ChEBI" id="CHEBI:77893"/>
        <dbReference type="EC" id="3.5.2.7"/>
    </reaction>
</comment>
<comment type="cofactor">
    <cofactor evidence="1">
        <name>Zn(2+)</name>
        <dbReference type="ChEBI" id="CHEBI:29105"/>
    </cofactor>
    <cofactor evidence="1">
        <name>Fe(3+)</name>
        <dbReference type="ChEBI" id="CHEBI:29034"/>
    </cofactor>
    <text evidence="1">Binds 1 zinc or iron ion per subunit.</text>
</comment>
<comment type="pathway">
    <text evidence="1">Amino-acid degradation; L-histidine degradation into L-glutamate; N-formimidoyl-L-glutamate from L-histidine: step 3/3.</text>
</comment>
<comment type="subcellular location">
    <subcellularLocation>
        <location evidence="1">Cytoplasm</location>
    </subcellularLocation>
</comment>
<comment type="similarity">
    <text evidence="1">Belongs to the metallo-dependent hydrolases superfamily. HutI family.</text>
</comment>
<organism>
    <name type="scientific">Burkholderia cenocepacia (strain HI2424)</name>
    <dbReference type="NCBI Taxonomy" id="331272"/>
    <lineage>
        <taxon>Bacteria</taxon>
        <taxon>Pseudomonadati</taxon>
        <taxon>Pseudomonadota</taxon>
        <taxon>Betaproteobacteria</taxon>
        <taxon>Burkholderiales</taxon>
        <taxon>Burkholderiaceae</taxon>
        <taxon>Burkholderia</taxon>
        <taxon>Burkholderia cepacia complex</taxon>
    </lineage>
</organism>
<accession>A0K8U2</accession>
<keyword id="KW-0963">Cytoplasm</keyword>
<keyword id="KW-0369">Histidine metabolism</keyword>
<keyword id="KW-0378">Hydrolase</keyword>
<keyword id="KW-0408">Iron</keyword>
<keyword id="KW-0479">Metal-binding</keyword>
<keyword id="KW-0862">Zinc</keyword>
<evidence type="ECO:0000255" key="1">
    <source>
        <dbReference type="HAMAP-Rule" id="MF_00372"/>
    </source>
</evidence>
<protein>
    <recommendedName>
        <fullName evidence="1">Imidazolonepropionase</fullName>
        <ecNumber evidence="1">3.5.2.7</ecNumber>
    </recommendedName>
    <alternativeName>
        <fullName evidence="1">Imidazolone-5-propionate hydrolase</fullName>
    </alternativeName>
</protein>